<comment type="function">
    <text evidence="1">Catalyzes the transfer of a phosphate group to glutamate to form L-glutamate 5-phosphate.</text>
</comment>
<comment type="catalytic activity">
    <reaction evidence="1">
        <text>L-glutamate + ATP = L-glutamyl 5-phosphate + ADP</text>
        <dbReference type="Rhea" id="RHEA:14877"/>
        <dbReference type="ChEBI" id="CHEBI:29985"/>
        <dbReference type="ChEBI" id="CHEBI:30616"/>
        <dbReference type="ChEBI" id="CHEBI:58274"/>
        <dbReference type="ChEBI" id="CHEBI:456216"/>
        <dbReference type="EC" id="2.7.2.11"/>
    </reaction>
</comment>
<comment type="pathway">
    <text evidence="1">Amino-acid biosynthesis; L-proline biosynthesis; L-glutamate 5-semialdehyde from L-glutamate: step 1/2.</text>
</comment>
<comment type="subcellular location">
    <subcellularLocation>
        <location evidence="1">Cytoplasm</location>
    </subcellularLocation>
</comment>
<comment type="similarity">
    <text evidence="1">Belongs to the glutamate 5-kinase family.</text>
</comment>
<sequence>MTIDDRGQIRSARRIVVKVGSSSISGENAGQIGPLVDALAEAHGRGSQVVLVSSGAIATGIPYLALTERPKDLATQQAAAAVGQNVLIYRYQDSLDRYGIVAGQVLLTARDVENPTHRSNAKRAMERLLDLRILPIVNENDTVATHEIRFGDNDRLAALVAKLVEADLLVLLSDVDALYTKPPQESGAERIAHVGWNDQLEGVEIGSAGPSGVGTGGALTKVSAARQAAEHGTAVVLTATSLVVDALRGEPVGTWFAPAQETAVESAPAS</sequence>
<accession>Q6AFY0</accession>
<evidence type="ECO:0000255" key="1">
    <source>
        <dbReference type="HAMAP-Rule" id="MF_00456"/>
    </source>
</evidence>
<protein>
    <recommendedName>
        <fullName evidence="1">Glutamate 5-kinase</fullName>
        <ecNumber evidence="1">2.7.2.11</ecNumber>
    </recommendedName>
    <alternativeName>
        <fullName evidence="1">Gamma-glutamyl kinase</fullName>
        <shortName evidence="1">GK</shortName>
    </alternativeName>
</protein>
<gene>
    <name evidence="1" type="primary">proB</name>
    <name type="ordered locus">Lxx08070</name>
</gene>
<proteinExistence type="inferred from homology"/>
<dbReference type="EC" id="2.7.2.11" evidence="1"/>
<dbReference type="EMBL" id="AE016822">
    <property type="protein sequence ID" value="AAT88715.1"/>
    <property type="molecule type" value="Genomic_DNA"/>
</dbReference>
<dbReference type="RefSeq" id="WP_011185713.1">
    <property type="nucleotide sequence ID" value="NC_006087.1"/>
</dbReference>
<dbReference type="SMR" id="Q6AFY0"/>
<dbReference type="STRING" id="281090.Lxx08070"/>
<dbReference type="KEGG" id="lxx:Lxx08070"/>
<dbReference type="eggNOG" id="COG0263">
    <property type="taxonomic scope" value="Bacteria"/>
</dbReference>
<dbReference type="HOGENOM" id="CLU_025400_0_1_11"/>
<dbReference type="UniPathway" id="UPA00098">
    <property type="reaction ID" value="UER00359"/>
</dbReference>
<dbReference type="Proteomes" id="UP000001306">
    <property type="component" value="Chromosome"/>
</dbReference>
<dbReference type="GO" id="GO:0005829">
    <property type="term" value="C:cytosol"/>
    <property type="evidence" value="ECO:0007669"/>
    <property type="project" value="TreeGrafter"/>
</dbReference>
<dbReference type="GO" id="GO:0005524">
    <property type="term" value="F:ATP binding"/>
    <property type="evidence" value="ECO:0007669"/>
    <property type="project" value="UniProtKB-KW"/>
</dbReference>
<dbReference type="GO" id="GO:0004349">
    <property type="term" value="F:glutamate 5-kinase activity"/>
    <property type="evidence" value="ECO:0007669"/>
    <property type="project" value="UniProtKB-UniRule"/>
</dbReference>
<dbReference type="GO" id="GO:0055129">
    <property type="term" value="P:L-proline biosynthetic process"/>
    <property type="evidence" value="ECO:0007669"/>
    <property type="project" value="UniProtKB-UniRule"/>
</dbReference>
<dbReference type="CDD" id="cd04242">
    <property type="entry name" value="AAK_G5K_ProB"/>
    <property type="match status" value="1"/>
</dbReference>
<dbReference type="FunFam" id="3.40.1160.10:FF:000006">
    <property type="entry name" value="Glutamate 5-kinase"/>
    <property type="match status" value="1"/>
</dbReference>
<dbReference type="Gene3D" id="3.40.1160.10">
    <property type="entry name" value="Acetylglutamate kinase-like"/>
    <property type="match status" value="1"/>
</dbReference>
<dbReference type="HAMAP" id="MF_00456">
    <property type="entry name" value="ProB"/>
    <property type="match status" value="1"/>
</dbReference>
<dbReference type="InterPro" id="IPR036393">
    <property type="entry name" value="AceGlu_kinase-like_sf"/>
</dbReference>
<dbReference type="InterPro" id="IPR001048">
    <property type="entry name" value="Asp/Glu/Uridylate_kinase"/>
</dbReference>
<dbReference type="InterPro" id="IPR041739">
    <property type="entry name" value="G5K_ProB"/>
</dbReference>
<dbReference type="InterPro" id="IPR001057">
    <property type="entry name" value="Glu/AcGlu_kinase"/>
</dbReference>
<dbReference type="InterPro" id="IPR011529">
    <property type="entry name" value="Glu_5kinase"/>
</dbReference>
<dbReference type="InterPro" id="IPR005715">
    <property type="entry name" value="Glu_5kinase/COase_Synthase"/>
</dbReference>
<dbReference type="NCBIfam" id="TIGR01027">
    <property type="entry name" value="proB"/>
    <property type="match status" value="1"/>
</dbReference>
<dbReference type="PANTHER" id="PTHR43654">
    <property type="entry name" value="GLUTAMATE 5-KINASE"/>
    <property type="match status" value="1"/>
</dbReference>
<dbReference type="PANTHER" id="PTHR43654:SF1">
    <property type="entry name" value="ISOPENTENYL PHOSPHATE KINASE"/>
    <property type="match status" value="1"/>
</dbReference>
<dbReference type="Pfam" id="PF00696">
    <property type="entry name" value="AA_kinase"/>
    <property type="match status" value="1"/>
</dbReference>
<dbReference type="PIRSF" id="PIRSF000729">
    <property type="entry name" value="GK"/>
    <property type="match status" value="1"/>
</dbReference>
<dbReference type="PRINTS" id="PR00474">
    <property type="entry name" value="GLU5KINASE"/>
</dbReference>
<dbReference type="SUPFAM" id="SSF53633">
    <property type="entry name" value="Carbamate kinase-like"/>
    <property type="match status" value="1"/>
</dbReference>
<organism>
    <name type="scientific">Leifsonia xyli subsp. xyli (strain CTCB07)</name>
    <dbReference type="NCBI Taxonomy" id="281090"/>
    <lineage>
        <taxon>Bacteria</taxon>
        <taxon>Bacillati</taxon>
        <taxon>Actinomycetota</taxon>
        <taxon>Actinomycetes</taxon>
        <taxon>Micrococcales</taxon>
        <taxon>Microbacteriaceae</taxon>
        <taxon>Leifsonia</taxon>
    </lineage>
</organism>
<name>PROB_LEIXX</name>
<feature type="chain" id="PRO_0000109684" description="Glutamate 5-kinase">
    <location>
        <begin position="1"/>
        <end position="270"/>
    </location>
</feature>
<feature type="binding site" evidence="1">
    <location>
        <position position="18"/>
    </location>
    <ligand>
        <name>ATP</name>
        <dbReference type="ChEBI" id="CHEBI:30616"/>
    </ligand>
</feature>
<feature type="binding site" evidence="1">
    <location>
        <position position="54"/>
    </location>
    <ligand>
        <name>substrate</name>
    </ligand>
</feature>
<feature type="binding site" evidence="1">
    <location>
        <position position="141"/>
    </location>
    <ligand>
        <name>substrate</name>
    </ligand>
</feature>
<feature type="binding site" evidence="1">
    <location>
        <position position="153"/>
    </location>
    <ligand>
        <name>substrate</name>
    </ligand>
</feature>
<feature type="binding site" evidence="1">
    <location>
        <begin position="173"/>
        <end position="174"/>
    </location>
    <ligand>
        <name>ATP</name>
        <dbReference type="ChEBI" id="CHEBI:30616"/>
    </ligand>
</feature>
<keyword id="KW-0028">Amino-acid biosynthesis</keyword>
<keyword id="KW-0067">ATP-binding</keyword>
<keyword id="KW-0963">Cytoplasm</keyword>
<keyword id="KW-0418">Kinase</keyword>
<keyword id="KW-0547">Nucleotide-binding</keyword>
<keyword id="KW-0641">Proline biosynthesis</keyword>
<keyword id="KW-1185">Reference proteome</keyword>
<keyword id="KW-0808">Transferase</keyword>
<reference key="1">
    <citation type="journal article" date="2004" name="Mol. Plant Microbe Interact.">
        <title>The genome sequence of the Gram-positive sugarcane pathogen Leifsonia xyli subsp. xyli.</title>
        <authorList>
            <person name="Monteiro-Vitorello C.B."/>
            <person name="Camargo L.E.A."/>
            <person name="Van Sluys M.A."/>
            <person name="Kitajima J.P."/>
            <person name="Truffi D."/>
            <person name="do Amaral A.M."/>
            <person name="Harakava R."/>
            <person name="de Oliveira J.C.F."/>
            <person name="Wood D."/>
            <person name="de Oliveira M.C."/>
            <person name="Miyaki C.Y."/>
            <person name="Takita M.A."/>
            <person name="da Silva A.C.R."/>
            <person name="Furlan L.R."/>
            <person name="Carraro D.M."/>
            <person name="Camarotte G."/>
            <person name="Almeida N.F. Jr."/>
            <person name="Carrer H."/>
            <person name="Coutinho L.L."/>
            <person name="El-Dorry H.A."/>
            <person name="Ferro M.I.T."/>
            <person name="Gagliardi P.R."/>
            <person name="Giglioti E."/>
            <person name="Goldman M.H.S."/>
            <person name="Goldman G.H."/>
            <person name="Kimura E.T."/>
            <person name="Ferro E.S."/>
            <person name="Kuramae E.E."/>
            <person name="Lemos E.G.M."/>
            <person name="Lemos M.V.F."/>
            <person name="Mauro S.M.Z."/>
            <person name="Machado M.A."/>
            <person name="Marino C.L."/>
            <person name="Menck C.F."/>
            <person name="Nunes L.R."/>
            <person name="Oliveira R.C."/>
            <person name="Pereira G.G."/>
            <person name="Siqueira W."/>
            <person name="de Souza A.A."/>
            <person name="Tsai S.M."/>
            <person name="Zanca A.S."/>
            <person name="Simpson A.J.G."/>
            <person name="Brumbley S.M."/>
            <person name="Setubal J.C."/>
        </authorList>
    </citation>
    <scope>NUCLEOTIDE SEQUENCE [LARGE SCALE GENOMIC DNA]</scope>
    <source>
        <strain>CTCB07</strain>
    </source>
</reference>